<sequence>MLPARPEPLPVDPKTTAVIVIDMQNAYASPGGYLDLAGFDISGAAKVTHEIKGVLEVARSAGMTVIYFQNGWDDGYVEAGGPGSPNWWKSNALKTMRARPELQGKLLARGQWDYELVDDLTPQPGDIRLHKTRYSGFFNSQLDSVLRARGIRHLVFTGIATNVCVESTLRDGFMLEYFGTVLEDATHQAGPDFVQKAALFNIETFFGWVSTTADFKGTFGQLAPG</sequence>
<gene>
    <name evidence="1" type="primary">rutB</name>
    <name type="ordered locus">CC_2795</name>
</gene>
<keyword id="KW-0378">Hydrolase</keyword>
<keyword id="KW-1185">Reference proteome</keyword>
<feature type="chain" id="PRO_0000201836" description="Ureidoacrylate amidohydrolase RutB">
    <location>
        <begin position="1"/>
        <end position="225"/>
    </location>
</feature>
<feature type="active site" description="Proton acceptor" evidence="1">
    <location>
        <position position="22"/>
    </location>
</feature>
<feature type="active site" evidence="1">
    <location>
        <position position="131"/>
    </location>
</feature>
<feature type="active site" description="Nucleophile" evidence="1">
    <location>
        <position position="164"/>
    </location>
</feature>
<organism>
    <name type="scientific">Caulobacter vibrioides (strain ATCC 19089 / CIP 103742 / CB 15)</name>
    <name type="common">Caulobacter crescentus</name>
    <dbReference type="NCBI Taxonomy" id="190650"/>
    <lineage>
        <taxon>Bacteria</taxon>
        <taxon>Pseudomonadati</taxon>
        <taxon>Pseudomonadota</taxon>
        <taxon>Alphaproteobacteria</taxon>
        <taxon>Caulobacterales</taxon>
        <taxon>Caulobacteraceae</taxon>
        <taxon>Caulobacter</taxon>
    </lineage>
</organism>
<name>RUTB_CAUVC</name>
<protein>
    <recommendedName>
        <fullName evidence="1">Ureidoacrylate amidohydrolase RutB</fullName>
        <ecNumber evidence="1">3.5.1.110</ecNumber>
    </recommendedName>
</protein>
<proteinExistence type="inferred from homology"/>
<evidence type="ECO:0000255" key="1">
    <source>
        <dbReference type="HAMAP-Rule" id="MF_00830"/>
    </source>
</evidence>
<evidence type="ECO:0000305" key="2"/>
<reference key="1">
    <citation type="journal article" date="2001" name="Proc. Natl. Acad. Sci. U.S.A.">
        <title>Complete genome sequence of Caulobacter crescentus.</title>
        <authorList>
            <person name="Nierman W.C."/>
            <person name="Feldblyum T.V."/>
            <person name="Laub M.T."/>
            <person name="Paulsen I.T."/>
            <person name="Nelson K.E."/>
            <person name="Eisen J.A."/>
            <person name="Heidelberg J.F."/>
            <person name="Alley M.R.K."/>
            <person name="Ohta N."/>
            <person name="Maddock J.R."/>
            <person name="Potocka I."/>
            <person name="Nelson W.C."/>
            <person name="Newton A."/>
            <person name="Stephens C."/>
            <person name="Phadke N.D."/>
            <person name="Ely B."/>
            <person name="DeBoy R.T."/>
            <person name="Dodson R.J."/>
            <person name="Durkin A.S."/>
            <person name="Gwinn M.L."/>
            <person name="Haft D.H."/>
            <person name="Kolonay J.F."/>
            <person name="Smit J."/>
            <person name="Craven M.B."/>
            <person name="Khouri H.M."/>
            <person name="Shetty J."/>
            <person name="Berry K.J."/>
            <person name="Utterback T.R."/>
            <person name="Tran K."/>
            <person name="Wolf A.M."/>
            <person name="Vamathevan J.J."/>
            <person name="Ermolaeva M.D."/>
            <person name="White O."/>
            <person name="Salzberg S.L."/>
            <person name="Venter J.C."/>
            <person name="Shapiro L."/>
            <person name="Fraser C.M."/>
        </authorList>
    </citation>
    <scope>NUCLEOTIDE SEQUENCE [LARGE SCALE GENOMIC DNA]</scope>
    <source>
        <strain>ATCC 19089 / CIP 103742 / CB 15</strain>
    </source>
</reference>
<comment type="function">
    <text evidence="1">Hydrolyzes ureidoacrylate to form aminoacrylate and carbamate. The carbamate hydrolyzes spontaneously, thereby releasing one of the nitrogen atoms of the pyrimidine ring as ammonia and one of its carbon atoms as CO2.</text>
</comment>
<comment type="catalytic activity">
    <reaction evidence="1">
        <text>(Z)-3-ureidoacrylate + H2O + H(+) = (Z)-3-aminoacrylate + NH4(+) + CO2</text>
        <dbReference type="Rhea" id="RHEA:42624"/>
        <dbReference type="ChEBI" id="CHEBI:15377"/>
        <dbReference type="ChEBI" id="CHEBI:15378"/>
        <dbReference type="ChEBI" id="CHEBI:16526"/>
        <dbReference type="ChEBI" id="CHEBI:28938"/>
        <dbReference type="ChEBI" id="CHEBI:59891"/>
        <dbReference type="ChEBI" id="CHEBI:59894"/>
        <dbReference type="EC" id="3.5.1.110"/>
    </reaction>
</comment>
<comment type="catalytic activity">
    <reaction evidence="1">
        <text>(Z)-3-ureidoacrylate + H2O = (Z)-3-aminoacrylate + carbamate + H(+)</text>
        <dbReference type="Rhea" id="RHEA:31603"/>
        <dbReference type="ChEBI" id="CHEBI:13941"/>
        <dbReference type="ChEBI" id="CHEBI:15377"/>
        <dbReference type="ChEBI" id="CHEBI:15378"/>
        <dbReference type="ChEBI" id="CHEBI:59891"/>
        <dbReference type="ChEBI" id="CHEBI:59894"/>
    </reaction>
</comment>
<comment type="catalytic activity">
    <reaction evidence="1">
        <text>(Z)-2-methylureidoacrylate + H2O + H(+) = (Z)-2-methylaminoacrylate + NH4(+) + CO2</text>
        <dbReference type="Rhea" id="RHEA:42620"/>
        <dbReference type="ChEBI" id="CHEBI:15377"/>
        <dbReference type="ChEBI" id="CHEBI:15378"/>
        <dbReference type="ChEBI" id="CHEBI:16526"/>
        <dbReference type="ChEBI" id="CHEBI:28938"/>
        <dbReference type="ChEBI" id="CHEBI:143783"/>
        <dbReference type="ChEBI" id="CHEBI:145735"/>
        <dbReference type="EC" id="3.5.1.110"/>
    </reaction>
</comment>
<comment type="similarity">
    <text evidence="1 2">Belongs to the isochorismatase family. RutB subfamily.</text>
</comment>
<accession>Q9A4N5</accession>
<dbReference type="EC" id="3.5.1.110" evidence="1"/>
<dbReference type="EMBL" id="AE005673">
    <property type="protein sequence ID" value="AAK24759.1"/>
    <property type="molecule type" value="Genomic_DNA"/>
</dbReference>
<dbReference type="PIR" id="C87595">
    <property type="entry name" value="C87595"/>
</dbReference>
<dbReference type="RefSeq" id="NP_421591.1">
    <property type="nucleotide sequence ID" value="NC_002696.2"/>
</dbReference>
<dbReference type="SMR" id="Q9A4N5"/>
<dbReference type="STRING" id="190650.CC_2795"/>
<dbReference type="EnsemblBacteria" id="AAK24759">
    <property type="protein sequence ID" value="AAK24759"/>
    <property type="gene ID" value="CC_2795"/>
</dbReference>
<dbReference type="KEGG" id="ccr:CC_2795"/>
<dbReference type="PATRIC" id="fig|190650.5.peg.2797"/>
<dbReference type="eggNOG" id="COG1335">
    <property type="taxonomic scope" value="Bacteria"/>
</dbReference>
<dbReference type="HOGENOM" id="CLU_068979_8_0_5"/>
<dbReference type="BioCyc" id="CAULO:CC2795-MONOMER"/>
<dbReference type="Proteomes" id="UP000001816">
    <property type="component" value="Chromosome"/>
</dbReference>
<dbReference type="GO" id="GO:0016811">
    <property type="term" value="F:hydrolase activity, acting on carbon-nitrogen (but not peptide) bonds, in linear amides"/>
    <property type="evidence" value="ECO:0007669"/>
    <property type="project" value="UniProtKB-UniRule"/>
</dbReference>
<dbReference type="GO" id="GO:0019740">
    <property type="term" value="P:nitrogen utilization"/>
    <property type="evidence" value="ECO:0007669"/>
    <property type="project" value="UniProtKB-UniRule"/>
</dbReference>
<dbReference type="GO" id="GO:0006212">
    <property type="term" value="P:uracil catabolic process"/>
    <property type="evidence" value="ECO:0007669"/>
    <property type="project" value="UniProtKB-UniRule"/>
</dbReference>
<dbReference type="CDD" id="cd00431">
    <property type="entry name" value="cysteine_hydrolases"/>
    <property type="match status" value="1"/>
</dbReference>
<dbReference type="Gene3D" id="3.40.50.850">
    <property type="entry name" value="Isochorismatase-like"/>
    <property type="match status" value="1"/>
</dbReference>
<dbReference type="HAMAP" id="MF_00830">
    <property type="entry name" value="RutB"/>
    <property type="match status" value="1"/>
</dbReference>
<dbReference type="InterPro" id="IPR000868">
    <property type="entry name" value="Isochorismatase-like_dom"/>
</dbReference>
<dbReference type="InterPro" id="IPR050272">
    <property type="entry name" value="Isochorismatase-like_hydrls"/>
</dbReference>
<dbReference type="InterPro" id="IPR036380">
    <property type="entry name" value="Isochorismatase-like_sf"/>
</dbReference>
<dbReference type="InterPro" id="IPR019916">
    <property type="entry name" value="RutB"/>
</dbReference>
<dbReference type="NCBIfam" id="TIGR03614">
    <property type="entry name" value="RutB"/>
    <property type="match status" value="1"/>
</dbReference>
<dbReference type="PANTHER" id="PTHR43540:SF6">
    <property type="entry name" value="ISOCHORISMATASE-LIKE DOMAIN-CONTAINING PROTEIN"/>
    <property type="match status" value="1"/>
</dbReference>
<dbReference type="PANTHER" id="PTHR43540">
    <property type="entry name" value="PEROXYUREIDOACRYLATE/UREIDOACRYLATE AMIDOHYDROLASE-RELATED"/>
    <property type="match status" value="1"/>
</dbReference>
<dbReference type="Pfam" id="PF00857">
    <property type="entry name" value="Isochorismatase"/>
    <property type="match status" value="1"/>
</dbReference>
<dbReference type="SUPFAM" id="SSF52499">
    <property type="entry name" value="Isochorismatase-like hydrolases"/>
    <property type="match status" value="1"/>
</dbReference>